<dbReference type="EMBL" id="CP000100">
    <property type="protein sequence ID" value="ABB57735.1"/>
    <property type="molecule type" value="Genomic_DNA"/>
</dbReference>
<dbReference type="RefSeq" id="WP_011244696.1">
    <property type="nucleotide sequence ID" value="NZ_JACJTX010000001.1"/>
</dbReference>
<dbReference type="SMR" id="Q31MI4"/>
<dbReference type="STRING" id="1140.Synpcc7942_1705"/>
<dbReference type="TCDB" id="3.E.2.2.1">
    <property type="family name" value="the photosynthetic reaction center (prc) family"/>
</dbReference>
<dbReference type="PaxDb" id="1140-Synpcc7942_1705"/>
<dbReference type="KEGG" id="syf:Synpcc7942_1705"/>
<dbReference type="eggNOG" id="ENOG5033CII">
    <property type="taxonomic scope" value="Bacteria"/>
</dbReference>
<dbReference type="HOGENOM" id="CLU_212150_0_0_3"/>
<dbReference type="BioCyc" id="MetaCyc:SYNPCC7942_1705-MONOMER"/>
<dbReference type="BioCyc" id="SYNEL:SYNPCC7942_1705-MONOMER"/>
<dbReference type="Proteomes" id="UP000889800">
    <property type="component" value="Chromosome"/>
</dbReference>
<dbReference type="GO" id="GO:0009539">
    <property type="term" value="C:photosystem II reaction center"/>
    <property type="evidence" value="ECO:0007669"/>
    <property type="project" value="InterPro"/>
</dbReference>
<dbReference type="GO" id="GO:0031676">
    <property type="term" value="C:plasma membrane-derived thylakoid membrane"/>
    <property type="evidence" value="ECO:0007669"/>
    <property type="project" value="UniProtKB-SubCell"/>
</dbReference>
<dbReference type="GO" id="GO:0015979">
    <property type="term" value="P:photosynthesis"/>
    <property type="evidence" value="ECO:0007669"/>
    <property type="project" value="UniProtKB-UniRule"/>
</dbReference>
<dbReference type="HAMAP" id="MF_01316">
    <property type="entry name" value="PSII_PsbI"/>
    <property type="match status" value="1"/>
</dbReference>
<dbReference type="InterPro" id="IPR003686">
    <property type="entry name" value="PSII_PsbI"/>
</dbReference>
<dbReference type="InterPro" id="IPR037271">
    <property type="entry name" value="PSII_PsbI_sf"/>
</dbReference>
<dbReference type="NCBIfam" id="NF002735">
    <property type="entry name" value="PRK02655.1"/>
    <property type="match status" value="1"/>
</dbReference>
<dbReference type="PANTHER" id="PTHR35772">
    <property type="entry name" value="PHOTOSYSTEM II REACTION CENTER PROTEIN I"/>
    <property type="match status" value="1"/>
</dbReference>
<dbReference type="PANTHER" id="PTHR35772:SF1">
    <property type="entry name" value="PHOTOSYSTEM II REACTION CENTER PROTEIN I"/>
    <property type="match status" value="1"/>
</dbReference>
<dbReference type="Pfam" id="PF02532">
    <property type="entry name" value="PsbI"/>
    <property type="match status" value="1"/>
</dbReference>
<dbReference type="SUPFAM" id="SSF161041">
    <property type="entry name" value="Photosystem II reaction center protein I, PsbI"/>
    <property type="match status" value="1"/>
</dbReference>
<comment type="function">
    <text evidence="1">One of the components of the core complex of photosystem II (PSII), required for its stability and/or assembly. PSII is a light-driven water:plastoquinone oxidoreductase that uses light energy to abstract electrons from H(2)O, generating O(2) and a proton gradient subsequently used for ATP formation. It consists of a core antenna complex that captures photons, and an electron transfer chain that converts photonic excitation into a charge separation.</text>
</comment>
<comment type="subunit">
    <text evidence="1">PSII is composed of 1 copy each of membrane proteins PsbA, PsbB, PsbC, PsbD, PsbE, PsbF, PsbH, PsbI, PsbJ, PsbK, PsbL, PsbM, PsbT, PsbX, PsbY, PsbZ, Psb30/Ycf12, peripheral proteins PsbO, CyanoQ (PsbQ), PsbU, PsbV and a large number of cofactors. It forms dimeric complexes.</text>
</comment>
<comment type="subcellular location">
    <subcellularLocation>
        <location evidence="1">Cellular thylakoid membrane</location>
        <topology evidence="1">Single-pass membrane protein</topology>
    </subcellularLocation>
</comment>
<comment type="similarity">
    <text evidence="1">Belongs to the PsbI family.</text>
</comment>
<evidence type="ECO:0000255" key="1">
    <source>
        <dbReference type="HAMAP-Rule" id="MF_01316"/>
    </source>
</evidence>
<keyword id="KW-0472">Membrane</keyword>
<keyword id="KW-0602">Photosynthesis</keyword>
<keyword id="KW-0604">Photosystem II</keyword>
<keyword id="KW-0674">Reaction center</keyword>
<keyword id="KW-1185">Reference proteome</keyword>
<keyword id="KW-0793">Thylakoid</keyword>
<keyword id="KW-0812">Transmembrane</keyword>
<keyword id="KW-1133">Transmembrane helix</keyword>
<proteinExistence type="inferred from homology"/>
<organism>
    <name type="scientific">Synechococcus elongatus (strain ATCC 33912 / PCC 7942 / FACHB-805)</name>
    <name type="common">Anacystis nidulans R2</name>
    <dbReference type="NCBI Taxonomy" id="1140"/>
    <lineage>
        <taxon>Bacteria</taxon>
        <taxon>Bacillati</taxon>
        <taxon>Cyanobacteriota</taxon>
        <taxon>Cyanophyceae</taxon>
        <taxon>Synechococcales</taxon>
        <taxon>Synechococcaceae</taxon>
        <taxon>Synechococcus</taxon>
    </lineage>
</organism>
<feature type="chain" id="PRO_0000298307" description="Photosystem II reaction center protein I">
    <location>
        <begin position="1"/>
        <end position="39"/>
    </location>
</feature>
<feature type="transmembrane region" description="Helical" evidence="1">
    <location>
        <begin position="6"/>
        <end position="26"/>
    </location>
</feature>
<protein>
    <recommendedName>
        <fullName evidence="1">Photosystem II reaction center protein I</fullName>
        <shortName evidence="1">PSII-I</shortName>
    </recommendedName>
    <alternativeName>
        <fullName evidence="1">PSII 4.4 kDa protein</fullName>
    </alternativeName>
</protein>
<reference key="1">
    <citation type="submission" date="2005-08" db="EMBL/GenBank/DDBJ databases">
        <title>Complete sequence of chromosome 1 of Synechococcus elongatus PCC 7942.</title>
        <authorList>
            <consortium name="US DOE Joint Genome Institute"/>
            <person name="Copeland A."/>
            <person name="Lucas S."/>
            <person name="Lapidus A."/>
            <person name="Barry K."/>
            <person name="Detter J.C."/>
            <person name="Glavina T."/>
            <person name="Hammon N."/>
            <person name="Israni S."/>
            <person name="Pitluck S."/>
            <person name="Schmutz J."/>
            <person name="Larimer F."/>
            <person name="Land M."/>
            <person name="Kyrpides N."/>
            <person name="Lykidis A."/>
            <person name="Golden S."/>
            <person name="Richardson P."/>
        </authorList>
    </citation>
    <scope>NUCLEOTIDE SEQUENCE [LARGE SCALE GENOMIC DNA]</scope>
    <source>
        <strain>ATCC 33912 / PCC 7942 / FACHB-805</strain>
    </source>
</reference>
<accession>Q31MI4</accession>
<sequence>MLALKVTVYVVVLFFVALFVFGFLSSDPARTPSRKDLED</sequence>
<name>PSBI_SYNE7</name>
<gene>
    <name evidence="1" type="primary">psbI</name>
    <name type="ordered locus">Synpcc7942_1705</name>
</gene>